<evidence type="ECO:0000255" key="1">
    <source>
        <dbReference type="HAMAP-Rule" id="MF_01718"/>
    </source>
</evidence>
<dbReference type="EC" id="7.6.2.-" evidence="1"/>
<dbReference type="EMBL" id="BX897699">
    <property type="protein sequence ID" value="CAF27301.1"/>
    <property type="molecule type" value="Genomic_DNA"/>
</dbReference>
<dbReference type="RefSeq" id="WP_011180424.1">
    <property type="nucleotide sequence ID" value="NZ_LRIJ02000001.1"/>
</dbReference>
<dbReference type="SMR" id="Q6G475"/>
<dbReference type="PaxDb" id="283166-BH04930"/>
<dbReference type="EnsemblBacteria" id="CAF27301">
    <property type="protein sequence ID" value="CAF27301"/>
    <property type="gene ID" value="BH04930"/>
</dbReference>
<dbReference type="KEGG" id="bhe:BH04930"/>
<dbReference type="eggNOG" id="COG4559">
    <property type="taxonomic scope" value="Bacteria"/>
</dbReference>
<dbReference type="OrthoDB" id="9810077at2"/>
<dbReference type="Proteomes" id="UP000000421">
    <property type="component" value="Chromosome"/>
</dbReference>
<dbReference type="GO" id="GO:0005886">
    <property type="term" value="C:plasma membrane"/>
    <property type="evidence" value="ECO:0007669"/>
    <property type="project" value="UniProtKB-SubCell"/>
</dbReference>
<dbReference type="GO" id="GO:0005524">
    <property type="term" value="F:ATP binding"/>
    <property type="evidence" value="ECO:0007669"/>
    <property type="project" value="UniProtKB-KW"/>
</dbReference>
<dbReference type="GO" id="GO:0016887">
    <property type="term" value="F:ATP hydrolysis activity"/>
    <property type="evidence" value="ECO:0007669"/>
    <property type="project" value="InterPro"/>
</dbReference>
<dbReference type="CDD" id="cd03214">
    <property type="entry name" value="ABC_Iron-Siderophores_B12_Hemin"/>
    <property type="match status" value="1"/>
</dbReference>
<dbReference type="Gene3D" id="3.40.50.300">
    <property type="entry name" value="P-loop containing nucleotide triphosphate hydrolases"/>
    <property type="match status" value="1"/>
</dbReference>
<dbReference type="InterPro" id="IPR003593">
    <property type="entry name" value="AAA+_ATPase"/>
</dbReference>
<dbReference type="InterPro" id="IPR003439">
    <property type="entry name" value="ABC_transporter-like_ATP-bd"/>
</dbReference>
<dbReference type="InterPro" id="IPR017871">
    <property type="entry name" value="ABC_transporter-like_CS"/>
</dbReference>
<dbReference type="InterPro" id="IPR027417">
    <property type="entry name" value="P-loop_NTPase"/>
</dbReference>
<dbReference type="NCBIfam" id="NF010068">
    <property type="entry name" value="PRK13548.1"/>
    <property type="match status" value="1"/>
</dbReference>
<dbReference type="PANTHER" id="PTHR42794">
    <property type="entry name" value="HEMIN IMPORT ATP-BINDING PROTEIN HMUV"/>
    <property type="match status" value="1"/>
</dbReference>
<dbReference type="PANTHER" id="PTHR42794:SF1">
    <property type="entry name" value="HEMIN IMPORT ATP-BINDING PROTEIN HMUV"/>
    <property type="match status" value="1"/>
</dbReference>
<dbReference type="Pfam" id="PF00005">
    <property type="entry name" value="ABC_tran"/>
    <property type="match status" value="1"/>
</dbReference>
<dbReference type="SMART" id="SM00382">
    <property type="entry name" value="AAA"/>
    <property type="match status" value="1"/>
</dbReference>
<dbReference type="SUPFAM" id="SSF52540">
    <property type="entry name" value="P-loop containing nucleoside triphosphate hydrolases"/>
    <property type="match status" value="1"/>
</dbReference>
<dbReference type="PROSITE" id="PS00211">
    <property type="entry name" value="ABC_TRANSPORTER_1"/>
    <property type="match status" value="1"/>
</dbReference>
<dbReference type="PROSITE" id="PS50893">
    <property type="entry name" value="ABC_TRANSPORTER_2"/>
    <property type="match status" value="1"/>
</dbReference>
<dbReference type="PROSITE" id="PS51261">
    <property type="entry name" value="HMUV"/>
    <property type="match status" value="1"/>
</dbReference>
<gene>
    <name evidence="1" type="primary">hmuV</name>
    <name type="ordered locus">BH04930</name>
</gene>
<sequence length="266" mass="29374">MIEAVDICVQRGKKQILKHVDLQAKNGAITVIIGPNGSGKSTFVKALSGEIPYSGKMTLNGHDVTQTKTSKMATMRAVLPQSTTLAFPFLVHEVVELGLSINKFTIAKKQFQNLPQKTLERVGLADYGHRLYHQLSGGEQARVQLARVLCQIWEPICNKIPRWMILDEPIASLDIQHQLVVMNIARNFAHRGGGVLAILHDLNLAAHYADKMILLKQGKVYCEGSASTVLTTQNLRDVYSCSLNVSELPQADIPFILPQTAQPLMK</sequence>
<organism>
    <name type="scientific">Bartonella henselae (strain ATCC 49882 / DSM 28221 / CCUG 30454 / Houston 1)</name>
    <name type="common">Rochalimaea henselae</name>
    <dbReference type="NCBI Taxonomy" id="283166"/>
    <lineage>
        <taxon>Bacteria</taxon>
        <taxon>Pseudomonadati</taxon>
        <taxon>Pseudomonadota</taxon>
        <taxon>Alphaproteobacteria</taxon>
        <taxon>Hyphomicrobiales</taxon>
        <taxon>Bartonellaceae</taxon>
        <taxon>Bartonella</taxon>
    </lineage>
</organism>
<protein>
    <recommendedName>
        <fullName evidence="1">Hemin import ATP-binding protein HmuV</fullName>
        <ecNumber evidence="1">7.6.2.-</ecNumber>
    </recommendedName>
</protein>
<proteinExistence type="inferred from homology"/>
<reference key="1">
    <citation type="journal article" date="2004" name="Proc. Natl. Acad. Sci. U.S.A.">
        <title>The louse-borne human pathogen Bartonella quintana is a genomic derivative of the zoonotic agent Bartonella henselae.</title>
        <authorList>
            <person name="Alsmark U.C.M."/>
            <person name="Frank A.C."/>
            <person name="Karlberg E.O."/>
            <person name="Legault B.-A."/>
            <person name="Ardell D.H."/>
            <person name="Canbaeck B."/>
            <person name="Eriksson A.-S."/>
            <person name="Naeslund A.K."/>
            <person name="Handley S.A."/>
            <person name="Huvet M."/>
            <person name="La Scola B."/>
            <person name="Holmberg M."/>
            <person name="Andersson S.G.E."/>
        </authorList>
    </citation>
    <scope>NUCLEOTIDE SEQUENCE [LARGE SCALE GENOMIC DNA]</scope>
    <source>
        <strain>ATCC 49882 / DSM 28221 / CCUG 30454 / Houston 1</strain>
    </source>
</reference>
<accession>Q6G475</accession>
<name>HMUV_BARHE</name>
<feature type="chain" id="PRO_0000269573" description="Hemin import ATP-binding protein HmuV">
    <location>
        <begin position="1"/>
        <end position="266"/>
    </location>
</feature>
<feature type="domain" description="ABC transporter" evidence="1">
    <location>
        <begin position="2"/>
        <end position="242"/>
    </location>
</feature>
<feature type="binding site" evidence="1">
    <location>
        <begin position="34"/>
        <end position="41"/>
    </location>
    <ligand>
        <name>ATP</name>
        <dbReference type="ChEBI" id="CHEBI:30616"/>
    </ligand>
</feature>
<comment type="function">
    <text evidence="1">Part of the ABC transporter complex HmuTUV involved in hemin import. Responsible for energy coupling to the transport system.</text>
</comment>
<comment type="subunit">
    <text evidence="1">The complex is composed of two ATP-binding proteins (HmuV), two transmembrane proteins (HmuU) and a solute-binding protein (HmuT).</text>
</comment>
<comment type="subcellular location">
    <subcellularLocation>
        <location evidence="1">Cell inner membrane</location>
        <topology evidence="1">Peripheral membrane protein</topology>
    </subcellularLocation>
</comment>
<comment type="similarity">
    <text evidence="1">Belongs to the ABC transporter superfamily. Heme (hemin) importer (TC 3.A.1.14.5) family.</text>
</comment>
<keyword id="KW-0067">ATP-binding</keyword>
<keyword id="KW-0997">Cell inner membrane</keyword>
<keyword id="KW-1003">Cell membrane</keyword>
<keyword id="KW-0472">Membrane</keyword>
<keyword id="KW-0547">Nucleotide-binding</keyword>
<keyword id="KW-1278">Translocase</keyword>
<keyword id="KW-0813">Transport</keyword>